<protein>
    <recommendedName>
        <fullName>Ubiquitin-like modifier-activating enzyme 5</fullName>
        <shortName>Ubiquitin-activating enzyme 5</shortName>
    </recommendedName>
</protein>
<accession>P91430</accession>
<keyword id="KW-0067">ATP-binding</keyword>
<keyword id="KW-0479">Metal-binding</keyword>
<keyword id="KW-0547">Nucleotide-binding</keyword>
<keyword id="KW-1185">Reference proteome</keyword>
<keyword id="KW-0833">Ubl conjugation pathway</keyword>
<keyword id="KW-0862">Zinc</keyword>
<name>UBA5_CAEEL</name>
<sequence>MSDEQIDKLVSRLDGALNRLGNVKKDHPLESSSNSKPTHQPKSPAPYRQKIEKLSAEVVDSNPYSRLMALQRMGIVNEYERIREKTVAVVGVGGVGSVVAEMLTRCGIGKLILFDYDKVEIANMNRLFYQPNQAGLSKVEAARDTLIHVNPDVQIEVHNFNITTMDNFDTFVNRIRKGSLTDGKIDLVLSCVDNFEARMAVNMACNEENQIWMESGVSENAVSGHIQYIEPGKTACFACVPPLVVASGIDERTLKRDGVCAASLPTTMAVVAGFLVMNTLKYLLNFGEVSQYVGYNALSDFFPRDSIKPNPYCDDSHCLQRQKEYEEKVANQPVDLEVEVPEEETVVHEDNEWGIELVNESEPSAEQSSSLNAGTGLKFAYEPIKRDAQTELSPAQAATHDFMKSIKDKLVEEAQNKGK</sequence>
<reference key="1">
    <citation type="journal article" date="1998" name="Science">
        <title>Genome sequence of the nematode C. elegans: a platform for investigating biology.</title>
        <authorList>
            <consortium name="The C. elegans sequencing consortium"/>
        </authorList>
    </citation>
    <scope>NUCLEOTIDE SEQUENCE [LARGE SCALE GENOMIC DNA]</scope>
    <source>
        <strain>Bristol N2</strain>
    </source>
</reference>
<reference key="2">
    <citation type="journal article" date="2013" name="J. Biol. Chem.">
        <title>The ubiquitin-fold modifier 1 (Ufm1) cascade of Caenorhabditis elegans.</title>
        <authorList>
            <person name="Hertel P."/>
            <person name="Daniel J."/>
            <person name="Stegehake D."/>
            <person name="Vaupel H."/>
            <person name="Kailayangiri S."/>
            <person name="Gruel C."/>
            <person name="Woltersdorf C."/>
            <person name="Liebau E."/>
        </authorList>
    </citation>
    <scope>FUNCTION</scope>
    <scope>INTERACTION WITH UFC-1</scope>
    <scope>TISSUE SPECIFICITY</scope>
    <scope>DISRUPTION PHENOTYPE</scope>
</reference>
<organism>
    <name type="scientific">Caenorhabditis elegans</name>
    <dbReference type="NCBI Taxonomy" id="6239"/>
    <lineage>
        <taxon>Eukaryota</taxon>
        <taxon>Metazoa</taxon>
        <taxon>Ecdysozoa</taxon>
        <taxon>Nematoda</taxon>
        <taxon>Chromadorea</taxon>
        <taxon>Rhabditida</taxon>
        <taxon>Rhabditina</taxon>
        <taxon>Rhabditomorpha</taxon>
        <taxon>Rhabditoidea</taxon>
        <taxon>Rhabditidae</taxon>
        <taxon>Peloderinae</taxon>
        <taxon>Caenorhabditis</taxon>
    </lineage>
</organism>
<gene>
    <name evidence="5" type="primary">uba-5</name>
    <name evidence="5" type="ORF">T03F1.1</name>
</gene>
<evidence type="ECO:0000250" key="1">
    <source>
        <dbReference type="UniProtKB" id="Q9GZZ9"/>
    </source>
</evidence>
<evidence type="ECO:0000256" key="2">
    <source>
        <dbReference type="SAM" id="MobiDB-lite"/>
    </source>
</evidence>
<evidence type="ECO:0000269" key="3">
    <source>
    </source>
</evidence>
<evidence type="ECO:0000305" key="4"/>
<evidence type="ECO:0000312" key="5">
    <source>
        <dbReference type="WormBase" id="T03F1.1"/>
    </source>
</evidence>
<comment type="function">
    <text evidence="3">E1-like enzyme which activates ufm-1. Required for interaction between ufm-1 and ufc-1.</text>
</comment>
<comment type="subunit">
    <text evidence="3">Interacts with ufc-1.</text>
</comment>
<comment type="tissue specificity">
    <text evidence="3">Expressed in the intestine.</text>
</comment>
<comment type="disruption phenotype">
    <text evidence="3">Reduced egg laying and lifespan. Delayed larval development. Enhanced resistance to pathogens, heat and oxidative stress. Reduced survival in the presence of cadmium. Inactivation of the ufm-1 cascade.</text>
</comment>
<comment type="similarity">
    <text evidence="4">Belongs to the ubiquitin-activating E1 family. UBA5 subfamily.</text>
</comment>
<feature type="chain" id="PRO_0000391937" description="Ubiquitin-like modifier-activating enzyme 5">
    <location>
        <begin position="1"/>
        <end position="419"/>
    </location>
</feature>
<feature type="region of interest" description="Disordered" evidence="2">
    <location>
        <begin position="18"/>
        <end position="47"/>
    </location>
</feature>
<feature type="compositionally biased region" description="Polar residues" evidence="2">
    <location>
        <begin position="30"/>
        <end position="41"/>
    </location>
</feature>
<feature type="active site" description="Glycyl thioester intermediate" evidence="1">
    <location>
        <position position="260"/>
    </location>
</feature>
<feature type="binding site" evidence="1">
    <location>
        <position position="94"/>
    </location>
    <ligand>
        <name>ATP</name>
        <dbReference type="ChEBI" id="CHEBI:30616"/>
    </ligand>
</feature>
<feature type="binding site" evidence="1">
    <location>
        <position position="115"/>
    </location>
    <ligand>
        <name>ATP</name>
        <dbReference type="ChEBI" id="CHEBI:30616"/>
    </ligand>
</feature>
<feature type="binding site" evidence="1">
    <location>
        <position position="138"/>
    </location>
    <ligand>
        <name>ATP</name>
        <dbReference type="ChEBI" id="CHEBI:30616"/>
    </ligand>
</feature>
<feature type="binding site" evidence="1">
    <location>
        <position position="161"/>
    </location>
    <ligand>
        <name>ATP</name>
        <dbReference type="ChEBI" id="CHEBI:30616"/>
    </ligand>
</feature>
<feature type="binding site" evidence="1">
    <location>
        <position position="194"/>
    </location>
    <ligand>
        <name>ATP</name>
        <dbReference type="ChEBI" id="CHEBI:30616"/>
    </ligand>
</feature>
<feature type="binding site" evidence="1">
    <location>
        <position position="236"/>
    </location>
    <ligand>
        <name>Zn(2+)</name>
        <dbReference type="ChEBI" id="CHEBI:29105"/>
    </ligand>
</feature>
<feature type="binding site" evidence="1">
    <location>
        <position position="239"/>
    </location>
    <ligand>
        <name>Zn(2+)</name>
        <dbReference type="ChEBI" id="CHEBI:29105"/>
    </ligand>
</feature>
<feature type="binding site" evidence="1">
    <location>
        <position position="313"/>
    </location>
    <ligand>
        <name>Zn(2+)</name>
        <dbReference type="ChEBI" id="CHEBI:29105"/>
    </ligand>
</feature>
<feature type="binding site" evidence="1">
    <location>
        <position position="318"/>
    </location>
    <ligand>
        <name>Zn(2+)</name>
        <dbReference type="ChEBI" id="CHEBI:29105"/>
    </ligand>
</feature>
<proteinExistence type="evidence at protein level"/>
<dbReference type="EMBL" id="FO080917">
    <property type="protein sequence ID" value="CCD67786.1"/>
    <property type="molecule type" value="Genomic_DNA"/>
</dbReference>
<dbReference type="PIR" id="T29201">
    <property type="entry name" value="T29201"/>
</dbReference>
<dbReference type="RefSeq" id="NP_001370592.1">
    <property type="nucleotide sequence ID" value="NM_001384040.2"/>
</dbReference>
<dbReference type="RefSeq" id="NP_491248.1">
    <property type="nucleotide sequence ID" value="NM_058847.7"/>
</dbReference>
<dbReference type="SMR" id="P91430"/>
<dbReference type="BioGRID" id="37442">
    <property type="interactions" value="7"/>
</dbReference>
<dbReference type="DIP" id="DIP-24997N"/>
<dbReference type="FunCoup" id="P91430">
    <property type="interactions" value="3362"/>
</dbReference>
<dbReference type="IntAct" id="P91430">
    <property type="interactions" value="2"/>
</dbReference>
<dbReference type="STRING" id="6239.T03F1.1.2"/>
<dbReference type="PaxDb" id="6239-T03F1.1.2"/>
<dbReference type="PeptideAtlas" id="P91430"/>
<dbReference type="EnsemblMetazoa" id="T03F1.1.1">
    <property type="protein sequence ID" value="T03F1.1.1"/>
    <property type="gene ID" value="WBGene00020184"/>
</dbReference>
<dbReference type="EnsemblMetazoa" id="T03F1.1.2">
    <property type="protein sequence ID" value="T03F1.1.2"/>
    <property type="gene ID" value="WBGene00020184"/>
</dbReference>
<dbReference type="EnsemblMetazoa" id="T03F1.1.3">
    <property type="protein sequence ID" value="T03F1.1.3"/>
    <property type="gene ID" value="WBGene00020184"/>
</dbReference>
<dbReference type="GeneID" id="171968"/>
<dbReference type="UCSC" id="T03F1.1.1">
    <property type="organism name" value="c. elegans"/>
</dbReference>
<dbReference type="AGR" id="WB:WBGene00020184"/>
<dbReference type="WormBase" id="T03F1.1">
    <property type="protein sequence ID" value="CE13096"/>
    <property type="gene ID" value="WBGene00020184"/>
    <property type="gene designation" value="uba-5"/>
</dbReference>
<dbReference type="eggNOG" id="KOG2336">
    <property type="taxonomic scope" value="Eukaryota"/>
</dbReference>
<dbReference type="GeneTree" id="ENSGT00940000156177"/>
<dbReference type="HOGENOM" id="CLU_013325_0_1_1"/>
<dbReference type="InParanoid" id="P91430"/>
<dbReference type="OMA" id="MNIVKDY"/>
<dbReference type="OrthoDB" id="206053at2759"/>
<dbReference type="PhylomeDB" id="P91430"/>
<dbReference type="Reactome" id="R-CEL-983168">
    <property type="pathway name" value="Antigen processing: Ubiquitination &amp; Proteasome degradation"/>
</dbReference>
<dbReference type="PRO" id="PR:P91430"/>
<dbReference type="Proteomes" id="UP000001940">
    <property type="component" value="Chromosome I"/>
</dbReference>
<dbReference type="Bgee" id="WBGene00020184">
    <property type="expression patterns" value="Expressed in germ line (C elegans) and 4 other cell types or tissues"/>
</dbReference>
<dbReference type="GO" id="GO:0005737">
    <property type="term" value="C:cytoplasm"/>
    <property type="evidence" value="ECO:0000318"/>
    <property type="project" value="GO_Central"/>
</dbReference>
<dbReference type="GO" id="GO:0005829">
    <property type="term" value="C:cytosol"/>
    <property type="evidence" value="ECO:0000318"/>
    <property type="project" value="GO_Central"/>
</dbReference>
<dbReference type="GO" id="GO:0005524">
    <property type="term" value="F:ATP binding"/>
    <property type="evidence" value="ECO:0007669"/>
    <property type="project" value="UniProtKB-KW"/>
</dbReference>
<dbReference type="GO" id="GO:0046872">
    <property type="term" value="F:metal ion binding"/>
    <property type="evidence" value="ECO:0007669"/>
    <property type="project" value="UniProtKB-KW"/>
</dbReference>
<dbReference type="GO" id="GO:0031624">
    <property type="term" value="F:ubiquitin conjugating enzyme binding"/>
    <property type="evidence" value="ECO:0000353"/>
    <property type="project" value="UniProtKB"/>
</dbReference>
<dbReference type="GO" id="GO:0071566">
    <property type="term" value="F:UFM1 activating enzyme activity"/>
    <property type="evidence" value="ECO:0000314"/>
    <property type="project" value="UniProtKB"/>
</dbReference>
<dbReference type="GO" id="GO:0071569">
    <property type="term" value="P:protein ufmylation"/>
    <property type="evidence" value="ECO:0000318"/>
    <property type="project" value="GO_Central"/>
</dbReference>
<dbReference type="GO" id="GO:0034976">
    <property type="term" value="P:response to endoplasmic reticulum stress"/>
    <property type="evidence" value="ECO:0000315"/>
    <property type="project" value="UniProtKB"/>
</dbReference>
<dbReference type="CDD" id="cd00757">
    <property type="entry name" value="ThiF_MoeB_HesA_family"/>
    <property type="match status" value="1"/>
</dbReference>
<dbReference type="FunFam" id="3.40.50.720:FF:000066">
    <property type="entry name" value="Putative ubiquitin-like modifier-activating enzyme 5"/>
    <property type="match status" value="1"/>
</dbReference>
<dbReference type="Gene3D" id="3.40.50.720">
    <property type="entry name" value="NAD(P)-binding Rossmann-like Domain"/>
    <property type="match status" value="1"/>
</dbReference>
<dbReference type="InterPro" id="IPR029752">
    <property type="entry name" value="D-isomer_DH_CS1"/>
</dbReference>
<dbReference type="InterPro" id="IPR045886">
    <property type="entry name" value="ThiF/MoeB/HesA"/>
</dbReference>
<dbReference type="InterPro" id="IPR000594">
    <property type="entry name" value="ThiF_NAD_FAD-bd"/>
</dbReference>
<dbReference type="InterPro" id="IPR035985">
    <property type="entry name" value="Ubiquitin-activating_enz"/>
</dbReference>
<dbReference type="PANTHER" id="PTHR10953">
    <property type="entry name" value="UBIQUITIN-ACTIVATING ENZYME E1"/>
    <property type="match status" value="1"/>
</dbReference>
<dbReference type="PANTHER" id="PTHR10953:SF9">
    <property type="entry name" value="UBIQUITIN-LIKE MODIFIER-ACTIVATING ENZYME 5"/>
    <property type="match status" value="1"/>
</dbReference>
<dbReference type="Pfam" id="PF00899">
    <property type="entry name" value="ThiF"/>
    <property type="match status" value="1"/>
</dbReference>
<dbReference type="SUPFAM" id="SSF69572">
    <property type="entry name" value="Activating enzymes of the ubiquitin-like proteins"/>
    <property type="match status" value="1"/>
</dbReference>